<proteinExistence type="evidence at protein level"/>
<reference key="1">
    <citation type="journal article" date="1997" name="J. Bacteriol.">
        <title>Characterization of the p-toluenesulfonate operon tsaMBCD and tsaR in Comamonas testosteroni T-2.</title>
        <authorList>
            <person name="Junker F."/>
            <person name="Kiewitz R."/>
            <person name="Cook A.M."/>
        </authorList>
    </citation>
    <scope>NUCLEOTIDE SEQUENCE [GENOMIC DNA]</scope>
    <scope>PROTEIN SEQUENCE OF 3-30</scope>
    <scope>SUBUNIT</scope>
    <source>
        <strain>DSM 6577 / T-2</strain>
    </source>
</reference>
<reference key="2">
    <citation type="journal article" date="2001" name="Appl. Environ. Microbiol.">
        <title>Map of the IncP1beta plasmid pTSA encoding the widespread genes (tsa) for p-toluenesulfonate degradation in Comamonas testosteroni T-2.</title>
        <authorList>
            <person name="Tralau T."/>
            <person name="Cook A.M."/>
            <person name="Ruff J."/>
        </authorList>
    </citation>
    <scope>NUCLEOTIDE SEQUENCE [GENOMIC DNA]</scope>
    <source>
        <strain>DSM 6577 / T-2</strain>
    </source>
</reference>
<reference key="3">
    <citation type="journal article" date="2004" name="Biochem. J.">
        <title>A novel outer-membrane anion channel (porin) as part of a putatively two-component transport system for 4-toluenesulphonate in Comamonas testosteroni T-2.</title>
        <authorList>
            <person name="Mampel J."/>
            <person name="Maier E."/>
            <person name="Tralau T."/>
            <person name="Ruff J."/>
            <person name="Benz R."/>
            <person name="Cook A.M."/>
        </authorList>
    </citation>
    <scope>NUCLEOTIDE SEQUENCE [GENOMIC DNA]</scope>
    <source>
        <strain>DSM 6577 / T-2</strain>
    </source>
</reference>
<reference key="4">
    <citation type="journal article" date="1991" name="J. Gen. Microbiol.">
        <title>Degradation of p-toluic acid (p-toluenecarboxylic acid) and p-toluenesulphonic acid via oxygenation of the methyl sidechain is initiated by the same set of enzymes in Comamonas testosteroni T-2.</title>
        <authorList>
            <person name="Locher H.H."/>
            <person name="Malli C."/>
            <person name="Hooper S.W."/>
            <person name="Vorherr T."/>
            <person name="Leisinger T."/>
            <person name="Cook A.M."/>
        </authorList>
    </citation>
    <scope>FUNCTION</scope>
    <scope>SUBSTRATE SPECIFICITY</scope>
</reference>
<comment type="function">
    <text evidence="5">Iron-sulfur flavoprotein carrying electrons from NADH to the oxygenase TsaM. Involved in the toluene-4-sulfonate degradation pathway.</text>
</comment>
<comment type="cofactor">
    <cofactor evidence="1">
        <name>FMN</name>
        <dbReference type="ChEBI" id="CHEBI:58210"/>
    </cofactor>
</comment>
<comment type="subunit">
    <text evidence="4">Monomer. Part of the p-toluenesulfonate methyl-monooxygenase complex TsaBM, comprising the reductase TsaB and the oxygenase TsaM.</text>
</comment>
<dbReference type="EC" id="1.5.1.-"/>
<dbReference type="EMBL" id="AH010657">
    <property type="protein sequence ID" value="AAC44805.1"/>
    <property type="molecule type" value="Genomic_DNA"/>
</dbReference>
<dbReference type="SMR" id="P94680"/>
<dbReference type="KEGG" id="ag:AAC44805"/>
<dbReference type="BioCyc" id="MetaCyc:MONOMER-5161"/>
<dbReference type="GO" id="GO:0051537">
    <property type="term" value="F:2 iron, 2 sulfur cluster binding"/>
    <property type="evidence" value="ECO:0007669"/>
    <property type="project" value="UniProtKB-KW"/>
</dbReference>
<dbReference type="GO" id="GO:0046872">
    <property type="term" value="F:metal ion binding"/>
    <property type="evidence" value="ECO:0007669"/>
    <property type="project" value="UniProtKB-KW"/>
</dbReference>
<dbReference type="GO" id="GO:0004497">
    <property type="term" value="F:monooxygenase activity"/>
    <property type="evidence" value="ECO:0007669"/>
    <property type="project" value="UniProtKB-KW"/>
</dbReference>
<dbReference type="GO" id="GO:0009056">
    <property type="term" value="P:catabolic process"/>
    <property type="evidence" value="ECO:0007669"/>
    <property type="project" value="UniProtKB-KW"/>
</dbReference>
<dbReference type="CDD" id="cd00207">
    <property type="entry name" value="fer2"/>
    <property type="match status" value="1"/>
</dbReference>
<dbReference type="CDD" id="cd06185">
    <property type="entry name" value="PDR_like"/>
    <property type="match status" value="1"/>
</dbReference>
<dbReference type="Gene3D" id="3.10.20.30">
    <property type="match status" value="1"/>
</dbReference>
<dbReference type="Gene3D" id="3.40.50.80">
    <property type="entry name" value="Nucleotide-binding domain of ferredoxin-NADP reductase (FNR) module"/>
    <property type="match status" value="1"/>
</dbReference>
<dbReference type="Gene3D" id="2.40.30.10">
    <property type="entry name" value="Translation factors"/>
    <property type="match status" value="1"/>
</dbReference>
<dbReference type="InterPro" id="IPR036010">
    <property type="entry name" value="2Fe-2S_ferredoxin-like_sf"/>
</dbReference>
<dbReference type="InterPro" id="IPR001041">
    <property type="entry name" value="2Fe-2S_ferredoxin-type"/>
</dbReference>
<dbReference type="InterPro" id="IPR006058">
    <property type="entry name" value="2Fe2S_fd_BS"/>
</dbReference>
<dbReference type="InterPro" id="IPR012675">
    <property type="entry name" value="Beta-grasp_dom_sf"/>
</dbReference>
<dbReference type="InterPro" id="IPR017927">
    <property type="entry name" value="FAD-bd_FR_type"/>
</dbReference>
<dbReference type="InterPro" id="IPR039261">
    <property type="entry name" value="FNR_nucleotide-bd"/>
</dbReference>
<dbReference type="InterPro" id="IPR050415">
    <property type="entry name" value="MRET"/>
</dbReference>
<dbReference type="InterPro" id="IPR001433">
    <property type="entry name" value="OxRdtase_FAD/NAD-bd"/>
</dbReference>
<dbReference type="InterPro" id="IPR017938">
    <property type="entry name" value="Riboflavin_synthase-like_b-brl"/>
</dbReference>
<dbReference type="PANTHER" id="PTHR47354:SF1">
    <property type="entry name" value="CARNITINE MONOOXYGENASE REDUCTASE SUBUNIT"/>
    <property type="match status" value="1"/>
</dbReference>
<dbReference type="PANTHER" id="PTHR47354">
    <property type="entry name" value="NADH OXIDOREDUCTASE HCR"/>
    <property type="match status" value="1"/>
</dbReference>
<dbReference type="Pfam" id="PF00111">
    <property type="entry name" value="Fer2"/>
    <property type="match status" value="1"/>
</dbReference>
<dbReference type="Pfam" id="PF00175">
    <property type="entry name" value="NAD_binding_1"/>
    <property type="match status" value="1"/>
</dbReference>
<dbReference type="PRINTS" id="PR00409">
    <property type="entry name" value="PHDIOXRDTASE"/>
</dbReference>
<dbReference type="SUPFAM" id="SSF54292">
    <property type="entry name" value="2Fe-2S ferredoxin-like"/>
    <property type="match status" value="1"/>
</dbReference>
<dbReference type="SUPFAM" id="SSF52343">
    <property type="entry name" value="Ferredoxin reductase-like, C-terminal NADP-linked domain"/>
    <property type="match status" value="1"/>
</dbReference>
<dbReference type="SUPFAM" id="SSF63380">
    <property type="entry name" value="Riboflavin synthase domain-like"/>
    <property type="match status" value="1"/>
</dbReference>
<dbReference type="PROSITE" id="PS00197">
    <property type="entry name" value="2FE2S_FER_1"/>
    <property type="match status" value="1"/>
</dbReference>
<dbReference type="PROSITE" id="PS51085">
    <property type="entry name" value="2FE2S_FER_2"/>
    <property type="match status" value="1"/>
</dbReference>
<dbReference type="PROSITE" id="PS51384">
    <property type="entry name" value="FAD_FR"/>
    <property type="match status" value="1"/>
</dbReference>
<evidence type="ECO:0000250" key="1"/>
<evidence type="ECO:0000255" key="2">
    <source>
        <dbReference type="PROSITE-ProRule" id="PRU00465"/>
    </source>
</evidence>
<evidence type="ECO:0000255" key="3">
    <source>
        <dbReference type="PROSITE-ProRule" id="PRU00716"/>
    </source>
</evidence>
<evidence type="ECO:0000269" key="4">
    <source>
    </source>
</evidence>
<evidence type="ECO:0000269" key="5">
    <source ref="4"/>
</evidence>
<keyword id="KW-0001">2Fe-2S</keyword>
<keyword id="KW-0058">Aromatic hydrocarbons catabolism</keyword>
<keyword id="KW-0903">Direct protein sequencing</keyword>
<keyword id="KW-0249">Electron transport</keyword>
<keyword id="KW-0285">Flavoprotein</keyword>
<keyword id="KW-0288">FMN</keyword>
<keyword id="KW-0408">Iron</keyword>
<keyword id="KW-0411">Iron-sulfur</keyword>
<keyword id="KW-0479">Metal-binding</keyword>
<keyword id="KW-0503">Monooxygenase</keyword>
<keyword id="KW-0520">NAD</keyword>
<keyword id="KW-0560">Oxidoreductase</keyword>
<keyword id="KW-0614">Plasmid</keyword>
<keyword id="KW-0813">Transport</keyword>
<name>TSAB1_COMTE</name>
<protein>
    <recommendedName>
        <fullName>Toluene-4-sulfonate monooxygenase system reductase subunit TsaB1</fullName>
        <ecNumber>1.5.1.-</ecNumber>
    </recommendedName>
    <alternativeName>
        <fullName>TS methylmonooxygenase system, reductase B</fullName>
    </alternativeName>
    <alternativeName>
        <fullName>Toluenesulfonate methyl-monooxygenase reductase component TsaB1</fullName>
    </alternativeName>
</protein>
<sequence>MSADVPVTVAAVRAVARDVLALELRHANGQPLPGASAGAHIDLALPNGLVRQYSLVNATGQATMDCYQVAVGWDANSRGGSVWIHEKLKVGQALRVTHRATCSEMAPEHRRVLLLAGGIGVTPIYAMAQACAQQGVDVELWASARSAPRLAYLEELKALLGQRLHLHADDEQGGPMNLTERLATQRWDAVYACGPAPMLDALTAATAHWAPGSVRMERFKGAEQPASERQPFELVLQRAGLSTTVDAHESVLDAMERVGVDFPWSCREGICGTCEAPVLEGEVQHLDYVLSPEERAEQRRMMVCVSRCGGGRLVLDI</sequence>
<feature type="chain" id="PRO_0000419121" description="Toluene-4-sulfonate monooxygenase system reductase subunit TsaB1">
    <location>
        <begin position="1"/>
        <end position="317"/>
    </location>
</feature>
<feature type="domain" description="FAD-binding FR-type" evidence="3">
    <location>
        <begin position="2"/>
        <end position="108"/>
    </location>
</feature>
<feature type="domain" description="2Fe-2S ferredoxin-type" evidence="2">
    <location>
        <begin position="230"/>
        <end position="317"/>
    </location>
</feature>
<feature type="binding site" evidence="1">
    <location>
        <begin position="110"/>
        <end position="220"/>
    </location>
    <ligand>
        <name>NAD(+)</name>
        <dbReference type="ChEBI" id="CHEBI:57540"/>
    </ligand>
</feature>
<feature type="binding site" evidence="2">
    <location>
        <position position="266"/>
    </location>
    <ligand>
        <name>[2Fe-2S] cluster</name>
        <dbReference type="ChEBI" id="CHEBI:190135"/>
    </ligand>
</feature>
<feature type="binding site" evidence="2">
    <location>
        <position position="271"/>
    </location>
    <ligand>
        <name>[2Fe-2S] cluster</name>
        <dbReference type="ChEBI" id="CHEBI:190135"/>
    </ligand>
</feature>
<feature type="binding site" evidence="2">
    <location>
        <position position="274"/>
    </location>
    <ligand>
        <name>[2Fe-2S] cluster</name>
        <dbReference type="ChEBI" id="CHEBI:190135"/>
    </ligand>
</feature>
<feature type="binding site" evidence="2">
    <location>
        <position position="304"/>
    </location>
    <ligand>
        <name>[2Fe-2S] cluster</name>
        <dbReference type="ChEBI" id="CHEBI:190135"/>
    </ligand>
</feature>
<organism>
    <name type="scientific">Comamonas testosteroni</name>
    <name type="common">Pseudomonas testosteroni</name>
    <dbReference type="NCBI Taxonomy" id="285"/>
    <lineage>
        <taxon>Bacteria</taxon>
        <taxon>Pseudomonadati</taxon>
        <taxon>Pseudomonadota</taxon>
        <taxon>Betaproteobacteria</taxon>
        <taxon>Burkholderiales</taxon>
        <taxon>Comamonadaceae</taxon>
        <taxon>Comamonas</taxon>
    </lineage>
</organism>
<accession>P94680</accession>
<geneLocation type="plasmid">
    <name>pTSA</name>
</geneLocation>
<gene>
    <name type="primary">tsaB1</name>
    <name type="synonym">tsaB</name>
</gene>